<dbReference type="EMBL" id="CP000038">
    <property type="protein sequence ID" value="AAZ90759.1"/>
    <property type="status" value="ALT_INIT"/>
    <property type="molecule type" value="Genomic_DNA"/>
</dbReference>
<dbReference type="RefSeq" id="WP_001297587.1">
    <property type="nucleotide sequence ID" value="NC_007384.1"/>
</dbReference>
<dbReference type="KEGG" id="ssn:SSON_4264"/>
<dbReference type="HOGENOM" id="CLU_157779_1_0_6"/>
<dbReference type="Proteomes" id="UP000002529">
    <property type="component" value="Chromosome"/>
</dbReference>
<dbReference type="GO" id="GO:0005886">
    <property type="term" value="C:plasma membrane"/>
    <property type="evidence" value="ECO:0007669"/>
    <property type="project" value="UniProtKB-SubCell"/>
</dbReference>
<dbReference type="InterPro" id="IPR031381">
    <property type="entry name" value="YtcA"/>
</dbReference>
<dbReference type="Pfam" id="PF17090">
    <property type="entry name" value="Ytca"/>
    <property type="match status" value="1"/>
</dbReference>
<dbReference type="PROSITE" id="PS51257">
    <property type="entry name" value="PROKAR_LIPOPROTEIN"/>
    <property type="match status" value="1"/>
</dbReference>
<name>YTCA_SHISS</name>
<keyword id="KW-1003">Cell membrane</keyword>
<keyword id="KW-0449">Lipoprotein</keyword>
<keyword id="KW-0472">Membrane</keyword>
<keyword id="KW-0564">Palmitate</keyword>
<keyword id="KW-1185">Reference proteome</keyword>
<keyword id="KW-0732">Signal</keyword>
<keyword id="KW-0812">Transmembrane</keyword>
<keyword id="KW-1133">Transmembrane helix</keyword>
<feature type="signal peptide" evidence="2">
    <location>
        <begin position="1"/>
        <end position="26"/>
    </location>
</feature>
<feature type="chain" id="PRO_0000311874" description="Uncharacterized protein YtcA">
    <location>
        <begin position="27"/>
        <end position="91"/>
    </location>
</feature>
<feature type="transmembrane region" description="Helical" evidence="1">
    <location>
        <begin position="36"/>
        <end position="56"/>
    </location>
</feature>
<feature type="transmembrane region" description="Helical" evidence="1">
    <location>
        <begin position="70"/>
        <end position="90"/>
    </location>
</feature>
<feature type="lipid moiety-binding region" description="N-palmitoyl cysteine" evidence="2">
    <location>
        <position position="27"/>
    </location>
</feature>
<feature type="lipid moiety-binding region" description="S-diacylglycerol cysteine" evidence="2">
    <location>
        <position position="27"/>
    </location>
</feature>
<evidence type="ECO:0000255" key="1"/>
<evidence type="ECO:0000255" key="2">
    <source>
        <dbReference type="PROSITE-ProRule" id="PRU00303"/>
    </source>
</evidence>
<evidence type="ECO:0000305" key="3"/>
<protein>
    <recommendedName>
        <fullName>Uncharacterized protein YtcA</fullName>
    </recommendedName>
</protein>
<sequence length="91" mass="10287">MPTVLSRMAMQLKKTAWIIPVFMVSGCSLSPAIPVIGAYYPSWFFCAIASLILMLITRRVIQRANINLAFVGIIYTALFALYAMLFWLAFF</sequence>
<comment type="subcellular location">
    <subcellularLocation>
        <location evidence="2">Cell membrane</location>
        <topology evidence="2">Lipid-anchor</topology>
    </subcellularLocation>
    <subcellularLocation>
        <location evidence="3">Membrane</location>
        <topology evidence="3">Multi-pass membrane protein</topology>
    </subcellularLocation>
</comment>
<comment type="similarity">
    <text evidence="3">Belongs to the YtcA family.</text>
</comment>
<comment type="sequence caution" evidence="3">
    <conflict type="erroneous initiation">
        <sequence resource="EMBL-CDS" id="AAZ90759"/>
    </conflict>
</comment>
<gene>
    <name type="primary">ytcA</name>
    <name type="ordered locus">SSON_4264</name>
</gene>
<accession>Q3YUQ3</accession>
<reference key="1">
    <citation type="journal article" date="2005" name="Nucleic Acids Res.">
        <title>Genome dynamics and diversity of Shigella species, the etiologic agents of bacillary dysentery.</title>
        <authorList>
            <person name="Yang F."/>
            <person name="Yang J."/>
            <person name="Zhang X."/>
            <person name="Chen L."/>
            <person name="Jiang Y."/>
            <person name="Yan Y."/>
            <person name="Tang X."/>
            <person name="Wang J."/>
            <person name="Xiong Z."/>
            <person name="Dong J."/>
            <person name="Xue Y."/>
            <person name="Zhu Y."/>
            <person name="Xu X."/>
            <person name="Sun L."/>
            <person name="Chen S."/>
            <person name="Nie H."/>
            <person name="Peng J."/>
            <person name="Xu J."/>
            <person name="Wang Y."/>
            <person name="Yuan Z."/>
            <person name="Wen Y."/>
            <person name="Yao Z."/>
            <person name="Shen Y."/>
            <person name="Qiang B."/>
            <person name="Hou Y."/>
            <person name="Yu J."/>
            <person name="Jin Q."/>
        </authorList>
    </citation>
    <scope>NUCLEOTIDE SEQUENCE [LARGE SCALE GENOMIC DNA]</scope>
    <source>
        <strain>Ss046</strain>
    </source>
</reference>
<proteinExistence type="inferred from homology"/>
<organism>
    <name type="scientific">Shigella sonnei (strain Ss046)</name>
    <dbReference type="NCBI Taxonomy" id="300269"/>
    <lineage>
        <taxon>Bacteria</taxon>
        <taxon>Pseudomonadati</taxon>
        <taxon>Pseudomonadota</taxon>
        <taxon>Gammaproteobacteria</taxon>
        <taxon>Enterobacterales</taxon>
        <taxon>Enterobacteriaceae</taxon>
        <taxon>Shigella</taxon>
    </lineage>
</organism>